<organism>
    <name type="scientific">Mumps virus genotype N (strain L-Zagreb vaccine)</name>
    <name type="common">MuV</name>
    <dbReference type="NCBI Taxonomy" id="301186"/>
    <lineage>
        <taxon>Viruses</taxon>
        <taxon>Riboviria</taxon>
        <taxon>Orthornavirae</taxon>
        <taxon>Negarnaviricota</taxon>
        <taxon>Haploviricotina</taxon>
        <taxon>Monjiviricetes</taxon>
        <taxon>Mononegavirales</taxon>
        <taxon>Paramyxoviridae</taxon>
        <taxon>Rubulavirinae</taxon>
        <taxon>Orthorubulavirus</taxon>
        <taxon>Orthorubulavirus parotitidis</taxon>
        <taxon>Mumps orthorubulavirus</taxon>
    </lineage>
</organism>
<keyword id="KW-0691">RNA editing</keyword>
<comment type="RNA editing">
    <location>
        <position position="155" evidence="2"/>
    </location>
    <text evidence="2">Partially edited. RNA editing at this position consists of an insertion of 2 or 4 guanine nucleotides. The sequence displayed here is the V protein, derived from the unedited RNA. The edited RNA (+ 2 nucleotides) gives rise to the P protein (AC Q5SC57). The unedited RNA gives rise to the V protein (AC Q5SC47).</text>
</comment>
<comment type="similarity">
    <text evidence="3">Belongs to the Orthorubulavirus I protein family.</text>
</comment>
<organismHost>
    <name type="scientific">Homo sapiens</name>
    <name type="common">Human</name>
    <dbReference type="NCBI Taxonomy" id="9606"/>
</organismHost>
<reference key="1">
    <citation type="journal article" date="2005" name="Virus Res.">
        <title>Genetic characterization of L-Zagreb mumps vaccine strain.</title>
        <authorList>
            <person name="Ivancic J."/>
            <person name="Kosutic Gulija T."/>
            <person name="Forcic D."/>
            <person name="Baricevic M."/>
            <person name="Jug R."/>
            <person name="Mesko-Prejac M."/>
            <person name="Mazuran R."/>
        </authorList>
    </citation>
    <scope>NUCLEOTIDE SEQUENCE [GENOMIC RNA]</scope>
    <source>
        <strain>L-Zagreb vaccine</strain>
    </source>
</reference>
<reference key="2">
    <citation type="journal article" date="1990" name="J. Virol.">
        <title>RNA editing by G-nucleotide insertion in mumps virus P-gene mRNA transcripts.</title>
        <authorList>
            <person name="Paterson R.G."/>
            <person name="Lamb R.A."/>
        </authorList>
    </citation>
    <scope>RNA EDITING</scope>
    <source>
        <strain>RW</strain>
    </source>
</reference>
<sequence>MDQFIKQDETGDLIETGMNVANHFLSAPIQGTNSLSKATIIPGVAPVLIGNPEQKNIQYPTASHQGSKSKGRGSGAKPIIVSSSEGGTGGTQIPEPLFAQTGQGGVVTTVYQDPTIQPTGSYRSVELAKIGKERMINRFVEKPRTSTPVTEFKRGGGRERLPKARQSKRRA</sequence>
<accession>Q5SC46</accession>
<evidence type="ECO:0000256" key="1">
    <source>
        <dbReference type="SAM" id="MobiDB-lite"/>
    </source>
</evidence>
<evidence type="ECO:0000269" key="2">
    <source>
    </source>
</evidence>
<evidence type="ECO:0000305" key="3"/>
<dbReference type="EMBL" id="AY685920">
    <property type="protein sequence ID" value="AAV65059.1"/>
    <property type="molecule type" value="Genomic_RNA"/>
</dbReference>
<dbReference type="EMBL" id="AY685921">
    <property type="protein sequence ID" value="AAV65068.1"/>
    <property type="molecule type" value="Genomic_RNA"/>
</dbReference>
<dbReference type="Proteomes" id="UP000130023">
    <property type="component" value="Genome"/>
</dbReference>
<dbReference type="Proteomes" id="UP000181577">
    <property type="component" value="Genome"/>
</dbReference>
<feature type="chain" id="PRO_0000462025" description="I">
    <location>
        <begin position="1"/>
        <end position="171"/>
    </location>
</feature>
<feature type="region of interest" description="Disordered" evidence="1">
    <location>
        <begin position="57"/>
        <end position="100"/>
    </location>
</feature>
<feature type="region of interest" description="Disordered" evidence="1">
    <location>
        <begin position="143"/>
        <end position="171"/>
    </location>
</feature>
<feature type="compositionally biased region" description="Basic and acidic residues" evidence="1">
    <location>
        <begin position="151"/>
        <end position="162"/>
    </location>
</feature>
<proteinExistence type="inferred from homology"/>
<protein>
    <recommendedName>
        <fullName>I</fullName>
    </recommendedName>
</protein>
<name>I_MUMPZ</name>
<gene>
    <name evidence="3" type="primary">P/V/I</name>
</gene>